<keyword id="KW-0106">Calcium</keyword>
<keyword id="KW-0903">Direct protein sequencing</keyword>
<keyword id="KW-1015">Disulfide bond</keyword>
<keyword id="KW-0325">Glycoprotein</keyword>
<keyword id="KW-1200">Hemorrhagic toxin</keyword>
<keyword id="KW-1199">Hemostasis impairing toxin</keyword>
<keyword id="KW-0378">Hydrolase</keyword>
<keyword id="KW-0479">Metal-binding</keyword>
<keyword id="KW-0482">Metalloprotease</keyword>
<keyword id="KW-1201">Platelet aggregation inhibiting toxin</keyword>
<keyword id="KW-0645">Protease</keyword>
<keyword id="KW-0964">Secreted</keyword>
<keyword id="KW-0800">Toxin</keyword>
<keyword id="KW-0862">Zinc</keyword>
<evidence type="ECO:0000250" key="1"/>
<evidence type="ECO:0000255" key="2"/>
<evidence type="ECO:0000255" key="3">
    <source>
        <dbReference type="PROSITE-ProRule" id="PRU00068"/>
    </source>
</evidence>
<evidence type="ECO:0000255" key="4">
    <source>
        <dbReference type="PROSITE-ProRule" id="PRU00276"/>
    </source>
</evidence>
<evidence type="ECO:0000255" key="5">
    <source>
        <dbReference type="PROSITE-ProRule" id="PRU10095"/>
    </source>
</evidence>
<evidence type="ECO:0000269" key="6">
    <source>
    </source>
</evidence>
<evidence type="ECO:0000269" key="7">
    <source>
    </source>
</evidence>
<evidence type="ECO:0000269" key="8">
    <source>
    </source>
</evidence>
<evidence type="ECO:0000305" key="9"/>
<evidence type="ECO:0000305" key="10">
    <source>
    </source>
</evidence>
<evidence type="ECO:0000305" key="11">
    <source>
    </source>
</evidence>
<name>VM3AA_CROAT</name>
<comment type="function">
    <text evidence="6 7 8">Snake venom zinc metalloproteinase-disintegrin that causes hemorrhage by provoking the degradation of the sub-endothelial matrix proteins (fibronectin, laminin, type IV collagen, nidogen, and gelatins) and disturbances in platelet function. The recombinant cysteine-rich domain interacts with the alpha-2/beta-1 integrin (ITGA2/ITGB1) (collagen receptor), and inhibits the platelet aggregation induced by collagen.</text>
</comment>
<comment type="catalytic activity">
    <reaction>
        <text>Cleavage of 3-Asn-|-Gln-4, 5-His-|-Leu-6, 10-His-|-Leu-11, 14-Ala-|-Leu-15 and 16-Tyr-|-Leu-17 in insulin B chain. Removes C-terminal Leu from small peptides.</text>
        <dbReference type="EC" id="3.4.24.1"/>
    </reaction>
</comment>
<comment type="cofactor">
    <cofactor evidence="1">
        <name>Zn(2+)</name>
        <dbReference type="ChEBI" id="CHEBI:29105"/>
    </cofactor>
    <text evidence="1">Binds 1 zinc ion per subunit.</text>
</comment>
<comment type="subunit">
    <text>Monomer.</text>
</comment>
<comment type="subcellular location">
    <subcellularLocation>
        <location evidence="1">Secreted</location>
    </subcellularLocation>
</comment>
<comment type="tissue specificity">
    <text>Expressed by the venom gland.</text>
</comment>
<comment type="miscellaneous">
    <text evidence="10 11">Negative results: the recombinant cysteine-rich domain does not inhibit ADP-induced platelet aggregation (PubMed:10620350) as well as convulxin-induced platelet aggregation, demonstrating no activity on the other collagen receptor GPVI (GP6) (PubMed:12914938).</text>
</comment>
<comment type="similarity">
    <text evidence="9">Belongs to the venom metalloproteinase (M12B) family. P-III subfamily. P-IIIa sub-subfamily.</text>
</comment>
<dbReference type="EC" id="3.4.24.1" evidence="8"/>
<dbReference type="EMBL" id="U01234">
    <property type="protein sequence ID" value="AAA03326.1"/>
    <property type="molecule type" value="mRNA"/>
</dbReference>
<dbReference type="PIR" id="S41607">
    <property type="entry name" value="S41607"/>
</dbReference>
<dbReference type="SMR" id="Q92043"/>
<dbReference type="MEROPS" id="M12.142"/>
<dbReference type="GO" id="GO:0005576">
    <property type="term" value="C:extracellular region"/>
    <property type="evidence" value="ECO:0007669"/>
    <property type="project" value="UniProtKB-SubCell"/>
</dbReference>
<dbReference type="GO" id="GO:0005886">
    <property type="term" value="C:plasma membrane"/>
    <property type="evidence" value="ECO:0007669"/>
    <property type="project" value="TreeGrafter"/>
</dbReference>
<dbReference type="GO" id="GO:0046872">
    <property type="term" value="F:metal ion binding"/>
    <property type="evidence" value="ECO:0007669"/>
    <property type="project" value="UniProtKB-KW"/>
</dbReference>
<dbReference type="GO" id="GO:0004222">
    <property type="term" value="F:metalloendopeptidase activity"/>
    <property type="evidence" value="ECO:0007669"/>
    <property type="project" value="InterPro"/>
</dbReference>
<dbReference type="GO" id="GO:0090729">
    <property type="term" value="F:toxin activity"/>
    <property type="evidence" value="ECO:0007669"/>
    <property type="project" value="UniProtKB-KW"/>
</dbReference>
<dbReference type="GO" id="GO:0006508">
    <property type="term" value="P:proteolysis"/>
    <property type="evidence" value="ECO:0007669"/>
    <property type="project" value="UniProtKB-KW"/>
</dbReference>
<dbReference type="CDD" id="cd04269">
    <property type="entry name" value="ZnMc_adamalysin_II_like"/>
    <property type="match status" value="1"/>
</dbReference>
<dbReference type="FunFam" id="3.40.390.10:FF:000002">
    <property type="entry name" value="Disintegrin and metalloproteinase domain-containing protein 22"/>
    <property type="match status" value="1"/>
</dbReference>
<dbReference type="FunFam" id="4.10.70.10:FF:000001">
    <property type="entry name" value="Disintegrin and metalloproteinase domain-containing protein 22"/>
    <property type="match status" value="1"/>
</dbReference>
<dbReference type="Gene3D" id="3.40.390.10">
    <property type="entry name" value="Collagenase (Catalytic Domain)"/>
    <property type="match status" value="1"/>
</dbReference>
<dbReference type="Gene3D" id="4.10.70.10">
    <property type="entry name" value="Disintegrin domain"/>
    <property type="match status" value="1"/>
</dbReference>
<dbReference type="InterPro" id="IPR006586">
    <property type="entry name" value="ADAM_Cys-rich"/>
</dbReference>
<dbReference type="InterPro" id="IPR018358">
    <property type="entry name" value="Disintegrin_CS"/>
</dbReference>
<dbReference type="InterPro" id="IPR001762">
    <property type="entry name" value="Disintegrin_dom"/>
</dbReference>
<dbReference type="InterPro" id="IPR036436">
    <property type="entry name" value="Disintegrin_dom_sf"/>
</dbReference>
<dbReference type="InterPro" id="IPR024079">
    <property type="entry name" value="MetalloPept_cat_dom_sf"/>
</dbReference>
<dbReference type="InterPro" id="IPR001590">
    <property type="entry name" value="Peptidase_M12B"/>
</dbReference>
<dbReference type="InterPro" id="IPR034027">
    <property type="entry name" value="Reprolysin_adamalysin"/>
</dbReference>
<dbReference type="PANTHER" id="PTHR11905">
    <property type="entry name" value="ADAM A DISINTEGRIN AND METALLOPROTEASE DOMAIN"/>
    <property type="match status" value="1"/>
</dbReference>
<dbReference type="PANTHER" id="PTHR11905:SF32">
    <property type="entry name" value="DISINTEGRIN AND METALLOPROTEINASE DOMAIN-CONTAINING PROTEIN 28"/>
    <property type="match status" value="1"/>
</dbReference>
<dbReference type="Pfam" id="PF08516">
    <property type="entry name" value="ADAM_CR"/>
    <property type="match status" value="1"/>
</dbReference>
<dbReference type="Pfam" id="PF00200">
    <property type="entry name" value="Disintegrin"/>
    <property type="match status" value="1"/>
</dbReference>
<dbReference type="Pfam" id="PF01421">
    <property type="entry name" value="Reprolysin"/>
    <property type="match status" value="1"/>
</dbReference>
<dbReference type="PRINTS" id="PR00289">
    <property type="entry name" value="DISINTEGRIN"/>
</dbReference>
<dbReference type="SMART" id="SM00608">
    <property type="entry name" value="ACR"/>
    <property type="match status" value="1"/>
</dbReference>
<dbReference type="SMART" id="SM00050">
    <property type="entry name" value="DISIN"/>
    <property type="match status" value="1"/>
</dbReference>
<dbReference type="SUPFAM" id="SSF57552">
    <property type="entry name" value="Blood coagulation inhibitor (disintegrin)"/>
    <property type="match status" value="1"/>
</dbReference>
<dbReference type="SUPFAM" id="SSF55486">
    <property type="entry name" value="Metalloproteases ('zincins'), catalytic domain"/>
    <property type="match status" value="1"/>
</dbReference>
<dbReference type="PROSITE" id="PS50215">
    <property type="entry name" value="ADAM_MEPRO"/>
    <property type="match status" value="1"/>
</dbReference>
<dbReference type="PROSITE" id="PS00427">
    <property type="entry name" value="DISINTEGRIN_1"/>
    <property type="match status" value="1"/>
</dbReference>
<dbReference type="PROSITE" id="PS50214">
    <property type="entry name" value="DISINTEGRIN_2"/>
    <property type="match status" value="1"/>
</dbReference>
<dbReference type="PROSITE" id="PS00142">
    <property type="entry name" value="ZINC_PROTEASE"/>
    <property type="match status" value="1"/>
</dbReference>
<reference key="1">
    <citation type="journal article" date="1994" name="Arch. Biochem. Biophys.">
        <title>cDNA sequences for four snake venom metalloproteinases: structure, classification, and their relationship to mammalian reproductive proteins.</title>
        <authorList>
            <person name="Hite L.A."/>
            <person name="Jia L.-G."/>
            <person name="Bjarnason J.B."/>
            <person name="Fox J.W."/>
        </authorList>
    </citation>
    <scope>NUCLEOTIDE SEQUENCE [MRNA]</scope>
    <source>
        <tissue>Venom gland</tissue>
    </source>
</reference>
<reference key="2">
    <citation type="journal article" date="2009" name="J. Proteome Res.">
        <title>Exploring the venom proteome of the western diamondback rattlesnake, Crotalus atrox, via snake venomics and combinatorial peptide ligand library approaches.</title>
        <authorList>
            <person name="Calvete J.J."/>
            <person name="Fasoli E."/>
            <person name="Sanz L."/>
            <person name="Boschetti E."/>
            <person name="Righetti P.G."/>
        </authorList>
    </citation>
    <scope>PROTEIN SEQUENCE OF 7-17 AND 261-272</scope>
    <scope>IDENTIFICATION BY MASS SPECTROMETRY</scope>
    <source>
        <tissue>Venom</tissue>
    </source>
</reference>
<reference key="3">
    <citation type="journal article" date="1989" name="Arch. Biochem. Biophys.">
        <title>Degradation of extracellular matrix proteins by hemorrhagic metalloproteinases.</title>
        <authorList>
            <person name="Baramova E.N."/>
            <person name="Shannon J.D."/>
            <person name="Bjarnason J.B."/>
            <person name="Fox J.W."/>
        </authorList>
    </citation>
    <scope>FUNCTION</scope>
    <scope>CATALYTIC ACTIVITY</scope>
</reference>
<reference key="4">
    <citation type="journal article" date="2000" name="Arch. Biochem. Biophys.">
        <title>Inhibition of platelet aggregation by the recombinant cysteine-rich domain of the hemorrhagic snake venom metalloproteinase, atrolysin A.</title>
        <authorList>
            <person name="Jia L.G."/>
            <person name="Wang X.M."/>
            <person name="Shannon J.D."/>
            <person name="Bjarnason J.B."/>
            <person name="Fox J.W."/>
        </authorList>
    </citation>
    <scope>FUNCTION</scope>
</reference>
<reference key="5">
    <citation type="journal article" date="2003" name="FEBS Lett.">
        <title>Identification of sites in the cysteine-rich domain of the class P-III snake venom metalloproteinases responsible for inhibition of platelet function.</title>
        <authorList>
            <person name="Kamiguti A.S."/>
            <person name="Gallagher P."/>
            <person name="Marcinkiewicz C."/>
            <person name="Theakston R.D."/>
            <person name="Zuzel M."/>
            <person name="Fox J.W."/>
        </authorList>
    </citation>
    <scope>FUNCTION</scope>
</reference>
<proteinExistence type="evidence at protein level"/>
<feature type="chain" id="PRO_5000143927" description="Zinc metalloproteinase-disintegrin-like atrolysin-A">
    <location>
        <begin position="1"/>
        <end position="419" status="greater than"/>
    </location>
</feature>
<feature type="domain" description="Peptidase M12B" evidence="4">
    <location>
        <begin position="6"/>
        <end position="202"/>
    </location>
</feature>
<feature type="domain" description="Disintegrin" evidence="3">
    <location>
        <begin position="210"/>
        <end position="296"/>
    </location>
</feature>
<feature type="short sequence motif" description="D/ECD-tripeptide">
    <location>
        <begin position="274"/>
        <end position="276"/>
    </location>
</feature>
<feature type="active site" evidence="4 5">
    <location>
        <position position="143"/>
    </location>
</feature>
<feature type="binding site" evidence="1">
    <location>
        <position position="9"/>
    </location>
    <ligand>
        <name>Ca(2+)</name>
        <dbReference type="ChEBI" id="CHEBI:29108"/>
        <label>1</label>
    </ligand>
</feature>
<feature type="binding site" evidence="1">
    <location>
        <position position="93"/>
    </location>
    <ligand>
        <name>Ca(2+)</name>
        <dbReference type="ChEBI" id="CHEBI:29108"/>
        <label>1</label>
    </ligand>
</feature>
<feature type="binding site" evidence="1">
    <location>
        <position position="142"/>
    </location>
    <ligand>
        <name>Zn(2+)</name>
        <dbReference type="ChEBI" id="CHEBI:29105"/>
        <note>catalytic</note>
    </ligand>
</feature>
<feature type="binding site" evidence="1">
    <location>
        <position position="146"/>
    </location>
    <ligand>
        <name>Zn(2+)</name>
        <dbReference type="ChEBI" id="CHEBI:29105"/>
        <note>catalytic</note>
    </ligand>
</feature>
<feature type="binding site" evidence="1">
    <location>
        <position position="152"/>
    </location>
    <ligand>
        <name>Zn(2+)</name>
        <dbReference type="ChEBI" id="CHEBI:29105"/>
        <note>catalytic</note>
    </ligand>
</feature>
<feature type="binding site" evidence="1">
    <location>
        <position position="197"/>
    </location>
    <ligand>
        <name>Ca(2+)</name>
        <dbReference type="ChEBI" id="CHEBI:29108"/>
        <label>1</label>
    </ligand>
</feature>
<feature type="binding site" evidence="1">
    <location>
        <position position="200"/>
    </location>
    <ligand>
        <name>Ca(2+)</name>
        <dbReference type="ChEBI" id="CHEBI:29108"/>
        <label>1</label>
    </ligand>
</feature>
<feature type="binding site" evidence="1">
    <location>
        <position position="212"/>
    </location>
    <ligand>
        <name>Ca(2+)</name>
        <dbReference type="ChEBI" id="CHEBI:29108"/>
        <label>2</label>
    </ligand>
</feature>
<feature type="binding site" evidence="1">
    <location>
        <position position="215"/>
    </location>
    <ligand>
        <name>Ca(2+)</name>
        <dbReference type="ChEBI" id="CHEBI:29108"/>
        <label>2</label>
    </ligand>
</feature>
<feature type="binding site" evidence="1">
    <location>
        <position position="217"/>
    </location>
    <ligand>
        <name>Ca(2+)</name>
        <dbReference type="ChEBI" id="CHEBI:29108"/>
        <label>2</label>
    </ligand>
</feature>
<feature type="binding site" evidence="1">
    <location>
        <position position="219"/>
    </location>
    <ligand>
        <name>Ca(2+)</name>
        <dbReference type="ChEBI" id="CHEBI:29108"/>
        <label>2</label>
    </ligand>
</feature>
<feature type="binding site" evidence="1">
    <location>
        <position position="222"/>
    </location>
    <ligand>
        <name>Ca(2+)</name>
        <dbReference type="ChEBI" id="CHEBI:29108"/>
        <label>2</label>
    </ligand>
</feature>
<feature type="binding site" evidence="1">
    <location>
        <position position="225"/>
    </location>
    <ligand>
        <name>Ca(2+)</name>
        <dbReference type="ChEBI" id="CHEBI:29108"/>
        <label>2</label>
    </ligand>
</feature>
<feature type="glycosylation site" description="N-linked (GlcNAc...) asparagine" evidence="2">
    <location>
        <position position="72"/>
    </location>
</feature>
<feature type="glycosylation site" description="N-linked (GlcNAc...) asparagine" evidence="2">
    <location>
        <position position="326"/>
    </location>
</feature>
<feature type="glycosylation site" description="N-linked (GlcNAc...) asparagine" evidence="2">
    <location>
        <position position="338"/>
    </location>
</feature>
<feature type="glycosylation site" description="N-linked (GlcNAc...) asparagine" evidence="2">
    <location>
        <position position="342"/>
    </location>
</feature>
<feature type="disulfide bond" evidence="1">
    <location>
        <begin position="117"/>
        <end position="197"/>
    </location>
</feature>
<feature type="disulfide bond" evidence="1">
    <location>
        <begin position="157"/>
        <end position="181"/>
    </location>
</feature>
<feature type="disulfide bond" evidence="1">
    <location>
        <begin position="159"/>
        <end position="164"/>
    </location>
</feature>
<feature type="disulfide bond" evidence="1">
    <location>
        <begin position="213"/>
        <end position="242"/>
    </location>
</feature>
<feature type="disulfide bond" evidence="1">
    <location>
        <begin position="224"/>
        <end position="237"/>
    </location>
</feature>
<feature type="disulfide bond" evidence="1">
    <location>
        <begin position="226"/>
        <end position="232"/>
    </location>
</feature>
<feature type="disulfide bond" evidence="1">
    <location>
        <begin position="236"/>
        <end position="259"/>
    </location>
</feature>
<feature type="disulfide bond" evidence="1">
    <location>
        <begin position="250"/>
        <end position="256"/>
    </location>
</feature>
<feature type="disulfide bond" evidence="1">
    <location>
        <begin position="255"/>
        <end position="281"/>
    </location>
</feature>
<feature type="disulfide bond" evidence="1">
    <location>
        <begin position="268"/>
        <end position="288"/>
    </location>
</feature>
<feature type="disulfide bond" evidence="1">
    <location>
        <begin position="275"/>
        <end position="307"/>
    </location>
</feature>
<feature type="disulfide bond" evidence="1">
    <location>
        <begin position="300"/>
        <end position="312"/>
    </location>
</feature>
<feature type="disulfide bond" evidence="1">
    <location>
        <begin position="319"/>
        <end position="369"/>
    </location>
</feature>
<feature type="disulfide bond" evidence="1">
    <location>
        <begin position="334"/>
        <end position="376"/>
    </location>
</feature>
<feature type="disulfide bond" evidence="1">
    <location>
        <begin position="347"/>
        <end position="357"/>
    </location>
</feature>
<feature type="disulfide bond" evidence="1">
    <location>
        <begin position="364"/>
        <end position="398"/>
    </location>
</feature>
<feature type="disulfide bond" evidence="1">
    <location>
        <begin position="392"/>
        <end position="403"/>
    </location>
</feature>
<feature type="non-terminal residue">
    <location>
        <position position="419"/>
    </location>
</feature>
<sequence length="419" mass="46879">ERLTKRYVELVIVADHRMFTKYNGNLKKIRKWIYQIVNTINEIYIPLNIRVALVRLEIWSNGDLIDVTSAANVTLKSFGNWRVTNLLRRKSHDNAQLLTAIDLDEETLGLAPLGTMCDPKLSIGIVQDHSPINLLVAVTMAHELGHNLGMVHDENRCHCSTPACVMCAVLRQRPSYEFSDCSLNHYRTFIINYNPQCILNEPLQTDIISPPVCGNELLEVGEECDCGSPRTCRDPCCDAATCKLHSWVECESGECCQQCKFTSAGNVCRPARSECDIAESCTGQSADCPTDDFHRNGKPCLHNFGYCYNGNCPIMYHQCYALWGSNVTVAPDACFDINQSGNNSFYCRKENGVNIPCAQEDVKCGRLFCNVNDFLCRHKYSDDGMVDHGTKCADGKVCKNRQCVDVTTAYKSTSGFSQI</sequence>
<accession>Q92043</accession>
<organism>
    <name type="scientific">Crotalus atrox</name>
    <name type="common">Western diamondback rattlesnake</name>
    <dbReference type="NCBI Taxonomy" id="8730"/>
    <lineage>
        <taxon>Eukaryota</taxon>
        <taxon>Metazoa</taxon>
        <taxon>Chordata</taxon>
        <taxon>Craniata</taxon>
        <taxon>Vertebrata</taxon>
        <taxon>Euteleostomi</taxon>
        <taxon>Lepidosauria</taxon>
        <taxon>Squamata</taxon>
        <taxon>Bifurcata</taxon>
        <taxon>Unidentata</taxon>
        <taxon>Episquamata</taxon>
        <taxon>Toxicofera</taxon>
        <taxon>Serpentes</taxon>
        <taxon>Colubroidea</taxon>
        <taxon>Viperidae</taxon>
        <taxon>Crotalinae</taxon>
        <taxon>Crotalus</taxon>
    </lineage>
</organism>
<protein>
    <recommendedName>
        <fullName>Zinc metalloproteinase-disintegrin-like atrolysin-A</fullName>
        <ecNumber evidence="8">3.4.24.1</ecNumber>
    </recommendedName>
    <alternativeName>
        <fullName>Alpha-proteinase</fullName>
    </alternativeName>
    <alternativeName>
        <fullName>Hemorrhagic toxin A</fullName>
        <shortName>HT-A</shortName>
    </alternativeName>
    <alternativeName>
        <fullName>Snake venom metalloproteinase</fullName>
        <shortName>SVMP</shortName>
    </alternativeName>
</protein>